<proteinExistence type="inferred from homology"/>
<accession>P66319</accession>
<accession>Q99XF6</accession>
<name>RL9_STAAW</name>
<keyword id="KW-0687">Ribonucleoprotein</keyword>
<keyword id="KW-0689">Ribosomal protein</keyword>
<keyword id="KW-0694">RNA-binding</keyword>
<keyword id="KW-0699">rRNA-binding</keyword>
<reference key="1">
    <citation type="journal article" date="2002" name="Lancet">
        <title>Genome and virulence determinants of high virulence community-acquired MRSA.</title>
        <authorList>
            <person name="Baba T."/>
            <person name="Takeuchi F."/>
            <person name="Kuroda M."/>
            <person name="Yuzawa H."/>
            <person name="Aoki K."/>
            <person name="Oguchi A."/>
            <person name="Nagai Y."/>
            <person name="Iwama N."/>
            <person name="Asano K."/>
            <person name="Naimi T."/>
            <person name="Kuroda H."/>
            <person name="Cui L."/>
            <person name="Yamamoto K."/>
            <person name="Hiramatsu K."/>
        </authorList>
    </citation>
    <scope>NUCLEOTIDE SEQUENCE [LARGE SCALE GENOMIC DNA]</scope>
    <source>
        <strain>MW2</strain>
    </source>
</reference>
<dbReference type="EMBL" id="BA000033">
    <property type="protein sequence ID" value="BAB93880.1"/>
    <property type="molecule type" value="Genomic_DNA"/>
</dbReference>
<dbReference type="RefSeq" id="WP_000864305.1">
    <property type="nucleotide sequence ID" value="NC_003923.1"/>
</dbReference>
<dbReference type="SMR" id="P66319"/>
<dbReference type="KEGG" id="sam:MW0015"/>
<dbReference type="HOGENOM" id="CLU_078938_3_2_9"/>
<dbReference type="GO" id="GO:1990904">
    <property type="term" value="C:ribonucleoprotein complex"/>
    <property type="evidence" value="ECO:0007669"/>
    <property type="project" value="UniProtKB-KW"/>
</dbReference>
<dbReference type="GO" id="GO:0005840">
    <property type="term" value="C:ribosome"/>
    <property type="evidence" value="ECO:0007669"/>
    <property type="project" value="UniProtKB-KW"/>
</dbReference>
<dbReference type="GO" id="GO:0019843">
    <property type="term" value="F:rRNA binding"/>
    <property type="evidence" value="ECO:0007669"/>
    <property type="project" value="UniProtKB-UniRule"/>
</dbReference>
<dbReference type="GO" id="GO:0003735">
    <property type="term" value="F:structural constituent of ribosome"/>
    <property type="evidence" value="ECO:0007669"/>
    <property type="project" value="InterPro"/>
</dbReference>
<dbReference type="GO" id="GO:0006412">
    <property type="term" value="P:translation"/>
    <property type="evidence" value="ECO:0007669"/>
    <property type="project" value="UniProtKB-UniRule"/>
</dbReference>
<dbReference type="FunFam" id="3.10.430.100:FF:000002">
    <property type="entry name" value="50S ribosomal protein L9"/>
    <property type="match status" value="1"/>
</dbReference>
<dbReference type="FunFam" id="3.40.5.10:FF:000002">
    <property type="entry name" value="50S ribosomal protein L9"/>
    <property type="match status" value="1"/>
</dbReference>
<dbReference type="Gene3D" id="3.10.430.100">
    <property type="entry name" value="Ribosomal protein L9, C-terminal domain"/>
    <property type="match status" value="1"/>
</dbReference>
<dbReference type="Gene3D" id="3.40.5.10">
    <property type="entry name" value="Ribosomal protein L9, N-terminal domain"/>
    <property type="match status" value="1"/>
</dbReference>
<dbReference type="HAMAP" id="MF_00503">
    <property type="entry name" value="Ribosomal_bL9"/>
    <property type="match status" value="1"/>
</dbReference>
<dbReference type="InterPro" id="IPR000244">
    <property type="entry name" value="Ribosomal_bL9"/>
</dbReference>
<dbReference type="InterPro" id="IPR009027">
    <property type="entry name" value="Ribosomal_bL9/RNase_H1_N"/>
</dbReference>
<dbReference type="InterPro" id="IPR020594">
    <property type="entry name" value="Ribosomal_bL9_bac/chp"/>
</dbReference>
<dbReference type="InterPro" id="IPR020069">
    <property type="entry name" value="Ribosomal_bL9_C"/>
</dbReference>
<dbReference type="InterPro" id="IPR036791">
    <property type="entry name" value="Ribosomal_bL9_C_sf"/>
</dbReference>
<dbReference type="InterPro" id="IPR020070">
    <property type="entry name" value="Ribosomal_bL9_N"/>
</dbReference>
<dbReference type="InterPro" id="IPR036935">
    <property type="entry name" value="Ribosomal_bL9_N_sf"/>
</dbReference>
<dbReference type="NCBIfam" id="TIGR00158">
    <property type="entry name" value="L9"/>
    <property type="match status" value="1"/>
</dbReference>
<dbReference type="PANTHER" id="PTHR21368">
    <property type="entry name" value="50S RIBOSOMAL PROTEIN L9"/>
    <property type="match status" value="1"/>
</dbReference>
<dbReference type="Pfam" id="PF03948">
    <property type="entry name" value="Ribosomal_L9_C"/>
    <property type="match status" value="1"/>
</dbReference>
<dbReference type="Pfam" id="PF01281">
    <property type="entry name" value="Ribosomal_L9_N"/>
    <property type="match status" value="1"/>
</dbReference>
<dbReference type="SUPFAM" id="SSF55658">
    <property type="entry name" value="L9 N-domain-like"/>
    <property type="match status" value="1"/>
</dbReference>
<dbReference type="SUPFAM" id="SSF55653">
    <property type="entry name" value="Ribosomal protein L9 C-domain"/>
    <property type="match status" value="1"/>
</dbReference>
<dbReference type="PROSITE" id="PS00651">
    <property type="entry name" value="RIBOSOMAL_L9"/>
    <property type="match status" value="1"/>
</dbReference>
<comment type="function">
    <text evidence="1">Binds to the 23S rRNA.</text>
</comment>
<comment type="similarity">
    <text evidence="1">Belongs to the bacterial ribosomal protein bL9 family.</text>
</comment>
<gene>
    <name evidence="1" type="primary">rplI</name>
    <name type="ordered locus">MW0015</name>
</gene>
<organism>
    <name type="scientific">Staphylococcus aureus (strain MW2)</name>
    <dbReference type="NCBI Taxonomy" id="196620"/>
    <lineage>
        <taxon>Bacteria</taxon>
        <taxon>Bacillati</taxon>
        <taxon>Bacillota</taxon>
        <taxon>Bacilli</taxon>
        <taxon>Bacillales</taxon>
        <taxon>Staphylococcaceae</taxon>
        <taxon>Staphylococcus</taxon>
    </lineage>
</organism>
<sequence length="148" mass="16454">MKVIFTQDVKGKGKKGEVKEVPVGYANNFLLKKNYAVEATPGNLKQLELQKKRAKQERQQEIEDAKALKETLSNIEVEVSAKTGEGGKLFGSVSTKQIAEALKAQHDIKIDKRKMDLPNGIHSLGYTNVPVKLDKEVEGTIRVHTVEQ</sequence>
<feature type="chain" id="PRO_0000176680" description="Large ribosomal subunit protein bL9">
    <location>
        <begin position="1"/>
        <end position="148"/>
    </location>
</feature>
<evidence type="ECO:0000255" key="1">
    <source>
        <dbReference type="HAMAP-Rule" id="MF_00503"/>
    </source>
</evidence>
<evidence type="ECO:0000305" key="2"/>
<protein>
    <recommendedName>
        <fullName evidence="1">Large ribosomal subunit protein bL9</fullName>
    </recommendedName>
    <alternativeName>
        <fullName evidence="2">50S ribosomal protein L9</fullName>
    </alternativeName>
</protein>